<accession>A9W613</accession>
<organism>
    <name type="scientific">Methylorubrum extorquens (strain PA1)</name>
    <name type="common">Methylobacterium extorquens</name>
    <dbReference type="NCBI Taxonomy" id="419610"/>
    <lineage>
        <taxon>Bacteria</taxon>
        <taxon>Pseudomonadati</taxon>
        <taxon>Pseudomonadota</taxon>
        <taxon>Alphaproteobacteria</taxon>
        <taxon>Hyphomicrobiales</taxon>
        <taxon>Methylobacteriaceae</taxon>
        <taxon>Methylorubrum</taxon>
    </lineage>
</organism>
<sequence>MSQSVKRTAADKPLAPCPICGKPARTETKPFCSPRCADIDLGRWLGERYVIPGPEEEEMSYPPRSDDENRSR</sequence>
<name>YACG_METEP</name>
<gene>
    <name evidence="1" type="primary">yacG</name>
    <name type="ordered locus">Mext_2627</name>
</gene>
<proteinExistence type="inferred from homology"/>
<evidence type="ECO:0000255" key="1">
    <source>
        <dbReference type="HAMAP-Rule" id="MF_00649"/>
    </source>
</evidence>
<evidence type="ECO:0000256" key="2">
    <source>
        <dbReference type="SAM" id="MobiDB-lite"/>
    </source>
</evidence>
<keyword id="KW-0479">Metal-binding</keyword>
<keyword id="KW-0862">Zinc</keyword>
<protein>
    <recommendedName>
        <fullName evidence="1">DNA gyrase inhibitor YacG</fullName>
    </recommendedName>
</protein>
<feature type="chain" id="PRO_1000200408" description="DNA gyrase inhibitor YacG">
    <location>
        <begin position="1"/>
        <end position="72"/>
    </location>
</feature>
<feature type="region of interest" description="Disordered" evidence="2">
    <location>
        <begin position="51"/>
        <end position="72"/>
    </location>
</feature>
<feature type="binding site" evidence="1">
    <location>
        <position position="17"/>
    </location>
    <ligand>
        <name>Zn(2+)</name>
        <dbReference type="ChEBI" id="CHEBI:29105"/>
    </ligand>
</feature>
<feature type="binding site" evidence="1">
    <location>
        <position position="20"/>
    </location>
    <ligand>
        <name>Zn(2+)</name>
        <dbReference type="ChEBI" id="CHEBI:29105"/>
    </ligand>
</feature>
<feature type="binding site" evidence="1">
    <location>
        <position position="32"/>
    </location>
    <ligand>
        <name>Zn(2+)</name>
        <dbReference type="ChEBI" id="CHEBI:29105"/>
    </ligand>
</feature>
<feature type="binding site" evidence="1">
    <location>
        <position position="36"/>
    </location>
    <ligand>
        <name>Zn(2+)</name>
        <dbReference type="ChEBI" id="CHEBI:29105"/>
    </ligand>
</feature>
<reference key="1">
    <citation type="submission" date="2007-12" db="EMBL/GenBank/DDBJ databases">
        <title>Complete sequence of Methylobacterium extorquens PA1.</title>
        <authorList>
            <consortium name="US DOE Joint Genome Institute"/>
            <person name="Copeland A."/>
            <person name="Lucas S."/>
            <person name="Lapidus A."/>
            <person name="Barry K."/>
            <person name="Glavina del Rio T."/>
            <person name="Dalin E."/>
            <person name="Tice H."/>
            <person name="Pitluck S."/>
            <person name="Saunders E."/>
            <person name="Brettin T."/>
            <person name="Bruce D."/>
            <person name="Detter J.C."/>
            <person name="Han C."/>
            <person name="Schmutz J."/>
            <person name="Larimer F."/>
            <person name="Land M."/>
            <person name="Hauser L."/>
            <person name="Kyrpides N."/>
            <person name="Kim E."/>
            <person name="Marx C."/>
            <person name="Richardson P."/>
        </authorList>
    </citation>
    <scope>NUCLEOTIDE SEQUENCE [LARGE SCALE GENOMIC DNA]</scope>
    <source>
        <strain>PA1</strain>
    </source>
</reference>
<dbReference type="EMBL" id="CP000908">
    <property type="protein sequence ID" value="ABY31019.1"/>
    <property type="molecule type" value="Genomic_DNA"/>
</dbReference>
<dbReference type="RefSeq" id="WP_012254010.1">
    <property type="nucleotide sequence ID" value="NC_010172.1"/>
</dbReference>
<dbReference type="SMR" id="A9W613"/>
<dbReference type="KEGG" id="mex:Mext_2627"/>
<dbReference type="eggNOG" id="COG3024">
    <property type="taxonomic scope" value="Bacteria"/>
</dbReference>
<dbReference type="HOGENOM" id="CLU_178280_2_0_5"/>
<dbReference type="BioCyc" id="MEXT419610:MEXT_RS13240-MONOMER"/>
<dbReference type="GO" id="GO:0008657">
    <property type="term" value="F:DNA topoisomerase type II (double strand cut, ATP-hydrolyzing) inhibitor activity"/>
    <property type="evidence" value="ECO:0007669"/>
    <property type="project" value="UniProtKB-UniRule"/>
</dbReference>
<dbReference type="GO" id="GO:0008270">
    <property type="term" value="F:zinc ion binding"/>
    <property type="evidence" value="ECO:0007669"/>
    <property type="project" value="UniProtKB-UniRule"/>
</dbReference>
<dbReference type="GO" id="GO:0006355">
    <property type="term" value="P:regulation of DNA-templated transcription"/>
    <property type="evidence" value="ECO:0007669"/>
    <property type="project" value="InterPro"/>
</dbReference>
<dbReference type="Gene3D" id="3.30.50.10">
    <property type="entry name" value="Erythroid Transcription Factor GATA-1, subunit A"/>
    <property type="match status" value="1"/>
</dbReference>
<dbReference type="HAMAP" id="MF_00649">
    <property type="entry name" value="DNA_gyrase_inhibitor_YacG"/>
    <property type="match status" value="1"/>
</dbReference>
<dbReference type="InterPro" id="IPR005584">
    <property type="entry name" value="DNA_gyrase_inhibitor_YacG"/>
</dbReference>
<dbReference type="InterPro" id="IPR013088">
    <property type="entry name" value="Znf_NHR/GATA"/>
</dbReference>
<dbReference type="PANTHER" id="PTHR36150">
    <property type="entry name" value="DNA GYRASE INHIBITOR YACG"/>
    <property type="match status" value="1"/>
</dbReference>
<dbReference type="PANTHER" id="PTHR36150:SF1">
    <property type="entry name" value="DNA GYRASE INHIBITOR YACG"/>
    <property type="match status" value="1"/>
</dbReference>
<dbReference type="Pfam" id="PF03884">
    <property type="entry name" value="YacG"/>
    <property type="match status" value="1"/>
</dbReference>
<dbReference type="SUPFAM" id="SSF57716">
    <property type="entry name" value="Glucocorticoid receptor-like (DNA-binding domain)"/>
    <property type="match status" value="1"/>
</dbReference>
<comment type="function">
    <text evidence="1">Inhibits all the catalytic activities of DNA gyrase by preventing its interaction with DNA. Acts by binding directly to the C-terminal domain of GyrB, which probably disrupts DNA binding by the gyrase.</text>
</comment>
<comment type="cofactor">
    <cofactor evidence="1">
        <name>Zn(2+)</name>
        <dbReference type="ChEBI" id="CHEBI:29105"/>
    </cofactor>
    <text evidence="1">Binds 1 zinc ion.</text>
</comment>
<comment type="subunit">
    <text evidence="1">Interacts with GyrB.</text>
</comment>
<comment type="similarity">
    <text evidence="1">Belongs to the DNA gyrase inhibitor YacG family.</text>
</comment>